<accession>Q7V2F9</accession>
<name>RRF_PROMP</name>
<reference key="1">
    <citation type="journal article" date="2003" name="Nature">
        <title>Genome divergence in two Prochlorococcus ecotypes reflects oceanic niche differentiation.</title>
        <authorList>
            <person name="Rocap G."/>
            <person name="Larimer F.W."/>
            <person name="Lamerdin J.E."/>
            <person name="Malfatti S."/>
            <person name="Chain P."/>
            <person name="Ahlgren N.A."/>
            <person name="Arellano A."/>
            <person name="Coleman M."/>
            <person name="Hauser L."/>
            <person name="Hess W.R."/>
            <person name="Johnson Z.I."/>
            <person name="Land M.L."/>
            <person name="Lindell D."/>
            <person name="Post A.F."/>
            <person name="Regala W."/>
            <person name="Shah M."/>
            <person name="Shaw S.L."/>
            <person name="Steglich C."/>
            <person name="Sullivan M.B."/>
            <person name="Ting C.S."/>
            <person name="Tolonen A."/>
            <person name="Webb E.A."/>
            <person name="Zinser E.R."/>
            <person name="Chisholm S.W."/>
        </authorList>
    </citation>
    <scope>NUCLEOTIDE SEQUENCE [LARGE SCALE GENOMIC DNA]</scope>
    <source>
        <strain>CCMP1986 / NIES-2087 / MED4</strain>
    </source>
</reference>
<keyword id="KW-0963">Cytoplasm</keyword>
<keyword id="KW-0648">Protein biosynthesis</keyword>
<comment type="function">
    <text evidence="1">Responsible for the release of ribosomes from messenger RNA at the termination of protein biosynthesis. May increase the efficiency of translation by recycling ribosomes from one round of translation to another.</text>
</comment>
<comment type="subcellular location">
    <subcellularLocation>
        <location evidence="1">Cytoplasm</location>
    </subcellularLocation>
</comment>
<comment type="similarity">
    <text evidence="1">Belongs to the RRF family.</text>
</comment>
<gene>
    <name evidence="1" type="primary">frr</name>
    <name type="ordered locus">PMM0521</name>
</gene>
<evidence type="ECO:0000255" key="1">
    <source>
        <dbReference type="HAMAP-Rule" id="MF_00040"/>
    </source>
</evidence>
<proteinExistence type="inferred from homology"/>
<sequence length="182" mass="20609">MKEQEIQSSMNKSVEATQRNFNTIRTGRANASLLDRISVEYYGAETPIKSLASISTIDSQTISIQPFDISSLQTIEKAISVSDLGITPNNDGKVIRINVPPLTEERRKEFCKLASKYAEEGKVALRNIRRDAVDKEKKDEKEGLISKDVSRDNQLEIQKFTDKYISLIETKLSEKEKEILKV</sequence>
<feature type="chain" id="PRO_0000167517" description="Ribosome-recycling factor">
    <location>
        <begin position="1"/>
        <end position="182"/>
    </location>
</feature>
<protein>
    <recommendedName>
        <fullName evidence="1">Ribosome-recycling factor</fullName>
        <shortName evidence="1">RRF</shortName>
    </recommendedName>
    <alternativeName>
        <fullName evidence="1">Ribosome-releasing factor</fullName>
    </alternativeName>
</protein>
<organism>
    <name type="scientific">Prochlorococcus marinus subsp. pastoris (strain CCMP1986 / NIES-2087 / MED4)</name>
    <dbReference type="NCBI Taxonomy" id="59919"/>
    <lineage>
        <taxon>Bacteria</taxon>
        <taxon>Bacillati</taxon>
        <taxon>Cyanobacteriota</taxon>
        <taxon>Cyanophyceae</taxon>
        <taxon>Synechococcales</taxon>
        <taxon>Prochlorococcaceae</taxon>
        <taxon>Prochlorococcus</taxon>
    </lineage>
</organism>
<dbReference type="EMBL" id="BX548174">
    <property type="protein sequence ID" value="CAE18980.1"/>
    <property type="molecule type" value="Genomic_DNA"/>
</dbReference>
<dbReference type="RefSeq" id="WP_011132156.1">
    <property type="nucleotide sequence ID" value="NC_005072.1"/>
</dbReference>
<dbReference type="SMR" id="Q7V2F9"/>
<dbReference type="STRING" id="59919.PMM0521"/>
<dbReference type="KEGG" id="pmm:PMM0521"/>
<dbReference type="eggNOG" id="COG0233">
    <property type="taxonomic scope" value="Bacteria"/>
</dbReference>
<dbReference type="HOGENOM" id="CLU_073981_2_0_3"/>
<dbReference type="OrthoDB" id="9804006at2"/>
<dbReference type="Proteomes" id="UP000001026">
    <property type="component" value="Chromosome"/>
</dbReference>
<dbReference type="GO" id="GO:0005737">
    <property type="term" value="C:cytoplasm"/>
    <property type="evidence" value="ECO:0007669"/>
    <property type="project" value="UniProtKB-SubCell"/>
</dbReference>
<dbReference type="GO" id="GO:0043023">
    <property type="term" value="F:ribosomal large subunit binding"/>
    <property type="evidence" value="ECO:0007669"/>
    <property type="project" value="TreeGrafter"/>
</dbReference>
<dbReference type="GO" id="GO:0006415">
    <property type="term" value="P:translational termination"/>
    <property type="evidence" value="ECO:0007669"/>
    <property type="project" value="UniProtKB-UniRule"/>
</dbReference>
<dbReference type="CDD" id="cd00520">
    <property type="entry name" value="RRF"/>
    <property type="match status" value="1"/>
</dbReference>
<dbReference type="FunFam" id="1.10.132.20:FF:000001">
    <property type="entry name" value="Ribosome-recycling factor"/>
    <property type="match status" value="1"/>
</dbReference>
<dbReference type="FunFam" id="3.30.1360.40:FF:000001">
    <property type="entry name" value="Ribosome-recycling factor"/>
    <property type="match status" value="1"/>
</dbReference>
<dbReference type="Gene3D" id="3.30.1360.40">
    <property type="match status" value="1"/>
</dbReference>
<dbReference type="Gene3D" id="1.10.132.20">
    <property type="entry name" value="Ribosome-recycling factor"/>
    <property type="match status" value="1"/>
</dbReference>
<dbReference type="HAMAP" id="MF_00040">
    <property type="entry name" value="RRF"/>
    <property type="match status" value="1"/>
</dbReference>
<dbReference type="InterPro" id="IPR002661">
    <property type="entry name" value="Ribosome_recyc_fac"/>
</dbReference>
<dbReference type="InterPro" id="IPR023584">
    <property type="entry name" value="Ribosome_recyc_fac_dom"/>
</dbReference>
<dbReference type="InterPro" id="IPR036191">
    <property type="entry name" value="RRF_sf"/>
</dbReference>
<dbReference type="NCBIfam" id="TIGR00496">
    <property type="entry name" value="frr"/>
    <property type="match status" value="1"/>
</dbReference>
<dbReference type="PANTHER" id="PTHR20982:SF3">
    <property type="entry name" value="MITOCHONDRIAL RIBOSOME RECYCLING FACTOR PSEUDO 1"/>
    <property type="match status" value="1"/>
</dbReference>
<dbReference type="PANTHER" id="PTHR20982">
    <property type="entry name" value="RIBOSOME RECYCLING FACTOR"/>
    <property type="match status" value="1"/>
</dbReference>
<dbReference type="Pfam" id="PF01765">
    <property type="entry name" value="RRF"/>
    <property type="match status" value="1"/>
</dbReference>
<dbReference type="SUPFAM" id="SSF55194">
    <property type="entry name" value="Ribosome recycling factor, RRF"/>
    <property type="match status" value="1"/>
</dbReference>